<sequence>MQFSYSWLKTQANPDLSADKLEHLLTMAGLEVEEIDTAAPAFSGVVVAEVKSVEKHPDADRLNVTQVDAGTGELVQIVCGAPNVKPGIKVPCSLPVAVLPGNFKIKPTKMRGVPSNGMLCSTNELGLPDDGVDGLHILPEDAPVGTNIREYLDLDDMLFTLKITPNRADCLSVKGIAREVSALTQCAFTPVEIQTAPIGSEKKQAVRIDAPADCGRFISRVIENVNAKAATPDWMKQRLERSGIRSISALVDIGNYVMLEIGQPMHVFDADKLSGSLIVRRAQNGETLACLNEKTVTLADNTLVVADEKGALSLAGLMGGAASAVSDGTQNIVLEAAWFEPEIIVGKSRQYGFGSDSSFRFERGVDYRLQADAIERATELVLQICGGAAGEMVEAQGKLPEAKQVGLRLGRLKTVLGVDIPAEQVETILQHLGLQPEKTAEGFRITAPSFRFDIEIEADLIEEIGRVYGYENIPDDYTSGRLKMSELPETRRPRFAVYNEMAARGYREVISYAFVDEQWELDFAANAAPIRLQNPLAAQYAVMRSTLIGGLVEILQNNLNRKQNRVRVFEIACVFGKGSDGRFVQNERIGGLWYGAAMPEQWGEKTRNADFYDIKADVENLLKNKAVEFVKTGHPALHPGRAANIVSDGKVIGFVGELHPKWLQKYDLPQAPLVFEIDMAAVLECGKTRYRAVSKFQPVRRDLAFVMPEVMNHDDLLLVLKGAANKLVQEISVFDVYRGTGLPEGMKSVAVKVILQDMENTLTDEAVEPLIGKLIGVATEAGARLRS</sequence>
<name>SYFB_NEIG1</name>
<organism>
    <name type="scientific">Neisseria gonorrhoeae (strain ATCC 700825 / FA 1090)</name>
    <dbReference type="NCBI Taxonomy" id="242231"/>
    <lineage>
        <taxon>Bacteria</taxon>
        <taxon>Pseudomonadati</taxon>
        <taxon>Pseudomonadota</taxon>
        <taxon>Betaproteobacteria</taxon>
        <taxon>Neisseriales</taxon>
        <taxon>Neisseriaceae</taxon>
        <taxon>Neisseria</taxon>
    </lineage>
</organism>
<accession>Q5F9T6</accession>
<protein>
    <recommendedName>
        <fullName evidence="1">Phenylalanine--tRNA ligase beta subunit</fullName>
        <ecNumber evidence="1">6.1.1.20</ecNumber>
    </recommendedName>
    <alternativeName>
        <fullName evidence="1">Phenylalanyl-tRNA synthetase beta subunit</fullName>
        <shortName evidence="1">PheRS</shortName>
    </alternativeName>
</protein>
<feature type="chain" id="PRO_0000126917" description="Phenylalanine--tRNA ligase beta subunit">
    <location>
        <begin position="1"/>
        <end position="787"/>
    </location>
</feature>
<feature type="domain" description="tRNA-binding" evidence="1">
    <location>
        <begin position="39"/>
        <end position="149"/>
    </location>
</feature>
<feature type="domain" description="B5" evidence="1">
    <location>
        <begin position="400"/>
        <end position="475"/>
    </location>
</feature>
<feature type="domain" description="FDX-ACB" evidence="1">
    <location>
        <begin position="694"/>
        <end position="786"/>
    </location>
</feature>
<feature type="binding site" evidence="1">
    <location>
        <position position="453"/>
    </location>
    <ligand>
        <name>Mg(2+)</name>
        <dbReference type="ChEBI" id="CHEBI:18420"/>
        <note>shared with alpha subunit</note>
    </ligand>
</feature>
<feature type="binding site" evidence="1">
    <location>
        <position position="459"/>
    </location>
    <ligand>
        <name>Mg(2+)</name>
        <dbReference type="ChEBI" id="CHEBI:18420"/>
        <note>shared with alpha subunit</note>
    </ligand>
</feature>
<feature type="binding site" evidence="1">
    <location>
        <position position="462"/>
    </location>
    <ligand>
        <name>Mg(2+)</name>
        <dbReference type="ChEBI" id="CHEBI:18420"/>
        <note>shared with alpha subunit</note>
    </ligand>
</feature>
<feature type="binding site" evidence="1">
    <location>
        <position position="463"/>
    </location>
    <ligand>
        <name>Mg(2+)</name>
        <dbReference type="ChEBI" id="CHEBI:18420"/>
        <note>shared with alpha subunit</note>
    </ligand>
</feature>
<dbReference type="EC" id="6.1.1.20" evidence="1"/>
<dbReference type="EMBL" id="AE004969">
    <property type="protein sequence ID" value="AAW89051.1"/>
    <property type="molecule type" value="Genomic_DNA"/>
</dbReference>
<dbReference type="RefSeq" id="WP_003687684.1">
    <property type="nucleotide sequence ID" value="NC_002946.2"/>
</dbReference>
<dbReference type="RefSeq" id="YP_207463.1">
    <property type="nucleotide sequence ID" value="NC_002946.2"/>
</dbReference>
<dbReference type="SMR" id="Q5F9T6"/>
<dbReference type="STRING" id="242231.NGO_0304"/>
<dbReference type="GeneID" id="66752641"/>
<dbReference type="KEGG" id="ngo:NGO_0304"/>
<dbReference type="PATRIC" id="fig|242231.10.peg.374"/>
<dbReference type="HOGENOM" id="CLU_016891_0_0_4"/>
<dbReference type="Proteomes" id="UP000000535">
    <property type="component" value="Chromosome"/>
</dbReference>
<dbReference type="GO" id="GO:0009328">
    <property type="term" value="C:phenylalanine-tRNA ligase complex"/>
    <property type="evidence" value="ECO:0007669"/>
    <property type="project" value="TreeGrafter"/>
</dbReference>
<dbReference type="GO" id="GO:0005524">
    <property type="term" value="F:ATP binding"/>
    <property type="evidence" value="ECO:0007669"/>
    <property type="project" value="UniProtKB-UniRule"/>
</dbReference>
<dbReference type="GO" id="GO:0000287">
    <property type="term" value="F:magnesium ion binding"/>
    <property type="evidence" value="ECO:0007669"/>
    <property type="project" value="UniProtKB-UniRule"/>
</dbReference>
<dbReference type="GO" id="GO:0004826">
    <property type="term" value="F:phenylalanine-tRNA ligase activity"/>
    <property type="evidence" value="ECO:0007669"/>
    <property type="project" value="UniProtKB-UniRule"/>
</dbReference>
<dbReference type="GO" id="GO:0000049">
    <property type="term" value="F:tRNA binding"/>
    <property type="evidence" value="ECO:0007669"/>
    <property type="project" value="UniProtKB-KW"/>
</dbReference>
<dbReference type="GO" id="GO:0006432">
    <property type="term" value="P:phenylalanyl-tRNA aminoacylation"/>
    <property type="evidence" value="ECO:0007669"/>
    <property type="project" value="UniProtKB-UniRule"/>
</dbReference>
<dbReference type="CDD" id="cd00769">
    <property type="entry name" value="PheRS_beta_core"/>
    <property type="match status" value="1"/>
</dbReference>
<dbReference type="CDD" id="cd02796">
    <property type="entry name" value="tRNA_bind_bactPheRS"/>
    <property type="match status" value="1"/>
</dbReference>
<dbReference type="FunFam" id="2.40.50.140:FF:000045">
    <property type="entry name" value="Phenylalanine--tRNA ligase beta subunit"/>
    <property type="match status" value="1"/>
</dbReference>
<dbReference type="FunFam" id="3.30.56.10:FF:000002">
    <property type="entry name" value="Phenylalanine--tRNA ligase beta subunit"/>
    <property type="match status" value="1"/>
</dbReference>
<dbReference type="FunFam" id="3.30.70.380:FF:000001">
    <property type="entry name" value="Phenylalanine--tRNA ligase beta subunit"/>
    <property type="match status" value="1"/>
</dbReference>
<dbReference type="FunFam" id="3.30.930.10:FF:000022">
    <property type="entry name" value="Phenylalanine--tRNA ligase beta subunit"/>
    <property type="match status" value="1"/>
</dbReference>
<dbReference type="FunFam" id="3.50.40.10:FF:000001">
    <property type="entry name" value="Phenylalanine--tRNA ligase beta subunit"/>
    <property type="match status" value="1"/>
</dbReference>
<dbReference type="Gene3D" id="3.30.56.10">
    <property type="match status" value="2"/>
</dbReference>
<dbReference type="Gene3D" id="3.30.930.10">
    <property type="entry name" value="Bira Bifunctional Protein, Domain 2"/>
    <property type="match status" value="1"/>
</dbReference>
<dbReference type="Gene3D" id="3.30.70.380">
    <property type="entry name" value="Ferrodoxin-fold anticodon-binding domain"/>
    <property type="match status" value="1"/>
</dbReference>
<dbReference type="Gene3D" id="2.40.50.140">
    <property type="entry name" value="Nucleic acid-binding proteins"/>
    <property type="match status" value="1"/>
</dbReference>
<dbReference type="Gene3D" id="3.50.40.10">
    <property type="entry name" value="Phenylalanyl-trna Synthetase, Chain B, domain 3"/>
    <property type="match status" value="1"/>
</dbReference>
<dbReference type="HAMAP" id="MF_00283">
    <property type="entry name" value="Phe_tRNA_synth_beta1"/>
    <property type="match status" value="1"/>
</dbReference>
<dbReference type="InterPro" id="IPR045864">
    <property type="entry name" value="aa-tRNA-synth_II/BPL/LPL"/>
</dbReference>
<dbReference type="InterPro" id="IPR005146">
    <property type="entry name" value="B3/B4_tRNA-bd"/>
</dbReference>
<dbReference type="InterPro" id="IPR009061">
    <property type="entry name" value="DNA-bd_dom_put_sf"/>
</dbReference>
<dbReference type="InterPro" id="IPR005121">
    <property type="entry name" value="Fdx_antiC-bd"/>
</dbReference>
<dbReference type="InterPro" id="IPR036690">
    <property type="entry name" value="Fdx_antiC-bd_sf"/>
</dbReference>
<dbReference type="InterPro" id="IPR012340">
    <property type="entry name" value="NA-bd_OB-fold"/>
</dbReference>
<dbReference type="InterPro" id="IPR045060">
    <property type="entry name" value="Phe-tRNA-ligase_IIc_bsu"/>
</dbReference>
<dbReference type="InterPro" id="IPR004532">
    <property type="entry name" value="Phe-tRNA-ligase_IIc_bsu_bact"/>
</dbReference>
<dbReference type="InterPro" id="IPR020825">
    <property type="entry name" value="Phe-tRNA_synthase-like_B3/B4"/>
</dbReference>
<dbReference type="InterPro" id="IPR041616">
    <property type="entry name" value="PheRS_beta_core"/>
</dbReference>
<dbReference type="InterPro" id="IPR002547">
    <property type="entry name" value="tRNA-bd_dom"/>
</dbReference>
<dbReference type="InterPro" id="IPR033714">
    <property type="entry name" value="tRNA_bind_bactPheRS"/>
</dbReference>
<dbReference type="InterPro" id="IPR005147">
    <property type="entry name" value="tRNA_synthase_B5-dom"/>
</dbReference>
<dbReference type="NCBIfam" id="TIGR00472">
    <property type="entry name" value="pheT_bact"/>
    <property type="match status" value="1"/>
</dbReference>
<dbReference type="NCBIfam" id="NF045760">
    <property type="entry name" value="YtpR"/>
    <property type="match status" value="1"/>
</dbReference>
<dbReference type="PANTHER" id="PTHR10947:SF0">
    <property type="entry name" value="PHENYLALANINE--TRNA LIGASE BETA SUBUNIT"/>
    <property type="match status" value="1"/>
</dbReference>
<dbReference type="PANTHER" id="PTHR10947">
    <property type="entry name" value="PHENYLALANYL-TRNA SYNTHETASE BETA CHAIN AND LEUCINE-RICH REPEAT-CONTAINING PROTEIN 47"/>
    <property type="match status" value="1"/>
</dbReference>
<dbReference type="Pfam" id="PF03483">
    <property type="entry name" value="B3_4"/>
    <property type="match status" value="1"/>
</dbReference>
<dbReference type="Pfam" id="PF03484">
    <property type="entry name" value="B5"/>
    <property type="match status" value="1"/>
</dbReference>
<dbReference type="Pfam" id="PF03147">
    <property type="entry name" value="FDX-ACB"/>
    <property type="match status" value="1"/>
</dbReference>
<dbReference type="Pfam" id="PF01588">
    <property type="entry name" value="tRNA_bind"/>
    <property type="match status" value="1"/>
</dbReference>
<dbReference type="Pfam" id="PF17759">
    <property type="entry name" value="tRNA_synthFbeta"/>
    <property type="match status" value="1"/>
</dbReference>
<dbReference type="SMART" id="SM00873">
    <property type="entry name" value="B3_4"/>
    <property type="match status" value="1"/>
</dbReference>
<dbReference type="SMART" id="SM00874">
    <property type="entry name" value="B5"/>
    <property type="match status" value="1"/>
</dbReference>
<dbReference type="SMART" id="SM00896">
    <property type="entry name" value="FDX-ACB"/>
    <property type="match status" value="1"/>
</dbReference>
<dbReference type="SUPFAM" id="SSF54991">
    <property type="entry name" value="Anticodon-binding domain of PheRS"/>
    <property type="match status" value="1"/>
</dbReference>
<dbReference type="SUPFAM" id="SSF55681">
    <property type="entry name" value="Class II aaRS and biotin synthetases"/>
    <property type="match status" value="1"/>
</dbReference>
<dbReference type="SUPFAM" id="SSF50249">
    <property type="entry name" value="Nucleic acid-binding proteins"/>
    <property type="match status" value="1"/>
</dbReference>
<dbReference type="SUPFAM" id="SSF56037">
    <property type="entry name" value="PheT/TilS domain"/>
    <property type="match status" value="1"/>
</dbReference>
<dbReference type="SUPFAM" id="SSF46955">
    <property type="entry name" value="Putative DNA-binding domain"/>
    <property type="match status" value="1"/>
</dbReference>
<dbReference type="PROSITE" id="PS51483">
    <property type="entry name" value="B5"/>
    <property type="match status" value="1"/>
</dbReference>
<dbReference type="PROSITE" id="PS51447">
    <property type="entry name" value="FDX_ACB"/>
    <property type="match status" value="1"/>
</dbReference>
<dbReference type="PROSITE" id="PS50886">
    <property type="entry name" value="TRBD"/>
    <property type="match status" value="1"/>
</dbReference>
<gene>
    <name evidence="1" type="primary">pheT</name>
    <name type="ordered locus">NGO_0304</name>
</gene>
<proteinExistence type="inferred from homology"/>
<comment type="catalytic activity">
    <reaction evidence="1">
        <text>tRNA(Phe) + L-phenylalanine + ATP = L-phenylalanyl-tRNA(Phe) + AMP + diphosphate + H(+)</text>
        <dbReference type="Rhea" id="RHEA:19413"/>
        <dbReference type="Rhea" id="RHEA-COMP:9668"/>
        <dbReference type="Rhea" id="RHEA-COMP:9699"/>
        <dbReference type="ChEBI" id="CHEBI:15378"/>
        <dbReference type="ChEBI" id="CHEBI:30616"/>
        <dbReference type="ChEBI" id="CHEBI:33019"/>
        <dbReference type="ChEBI" id="CHEBI:58095"/>
        <dbReference type="ChEBI" id="CHEBI:78442"/>
        <dbReference type="ChEBI" id="CHEBI:78531"/>
        <dbReference type="ChEBI" id="CHEBI:456215"/>
        <dbReference type="EC" id="6.1.1.20"/>
    </reaction>
</comment>
<comment type="cofactor">
    <cofactor evidence="1">
        <name>Mg(2+)</name>
        <dbReference type="ChEBI" id="CHEBI:18420"/>
    </cofactor>
    <text evidence="1">Binds 2 magnesium ions per tetramer.</text>
</comment>
<comment type="subunit">
    <text evidence="1">Tetramer of two alpha and two beta subunits.</text>
</comment>
<comment type="subcellular location">
    <subcellularLocation>
        <location evidence="1">Cytoplasm</location>
    </subcellularLocation>
</comment>
<comment type="similarity">
    <text evidence="1">Belongs to the phenylalanyl-tRNA synthetase beta subunit family. Type 1 subfamily.</text>
</comment>
<reference key="1">
    <citation type="submission" date="2003-03" db="EMBL/GenBank/DDBJ databases">
        <title>The complete genome sequence of Neisseria gonorrhoeae.</title>
        <authorList>
            <person name="Lewis L.A."/>
            <person name="Gillaspy A.F."/>
            <person name="McLaughlin R.E."/>
            <person name="Gipson M."/>
            <person name="Ducey T.F."/>
            <person name="Ownbey T."/>
            <person name="Hartman K."/>
            <person name="Nydick C."/>
            <person name="Carson M.B."/>
            <person name="Vaughn J."/>
            <person name="Thomson C."/>
            <person name="Song L."/>
            <person name="Lin S."/>
            <person name="Yuan X."/>
            <person name="Najar F."/>
            <person name="Zhan M."/>
            <person name="Ren Q."/>
            <person name="Zhu H."/>
            <person name="Qi S."/>
            <person name="Kenton S.M."/>
            <person name="Lai H."/>
            <person name="White J.D."/>
            <person name="Clifton S."/>
            <person name="Roe B.A."/>
            <person name="Dyer D.W."/>
        </authorList>
    </citation>
    <scope>NUCLEOTIDE SEQUENCE [LARGE SCALE GENOMIC DNA]</scope>
    <source>
        <strain>ATCC 700825 / FA 1090</strain>
    </source>
</reference>
<keyword id="KW-0030">Aminoacyl-tRNA synthetase</keyword>
<keyword id="KW-0067">ATP-binding</keyword>
<keyword id="KW-0963">Cytoplasm</keyword>
<keyword id="KW-0436">Ligase</keyword>
<keyword id="KW-0460">Magnesium</keyword>
<keyword id="KW-0479">Metal-binding</keyword>
<keyword id="KW-0547">Nucleotide-binding</keyword>
<keyword id="KW-0648">Protein biosynthesis</keyword>
<keyword id="KW-1185">Reference proteome</keyword>
<keyword id="KW-0694">RNA-binding</keyword>
<keyword id="KW-0820">tRNA-binding</keyword>
<evidence type="ECO:0000255" key="1">
    <source>
        <dbReference type="HAMAP-Rule" id="MF_00283"/>
    </source>
</evidence>